<name>GD_HHV1K</name>
<comment type="function">
    <text evidence="2 6 7 8">Envelope glycoprotein that binds to the host cell entry receptors NECTIN1, TNFRSF14/HVEM and 3-O-sulfated heparan sulfate, promoting the virus entry into host cells (PubMed:39048823, PubMed:39048830, PubMed:9696799). May trigger fusion with host membrane, by recruiting the fusion machinery composed of gB and gH/gL (By similarity).</text>
</comment>
<comment type="subunit">
    <text evidence="2 3">Homodimer (By similarity). Interacts with host receptor TNFRSF14. Interacts with host receptor NECTIN1. Mutant Rid1 interacts with host receptor NECTIN2. Interacts (via profusion domain) with gB; this interaction occurs in the absence of gH/gL. Interacts (via profusion domain) with gH/gL heterodimer; this interaction occurs in the absence of gB. Associates with the gB-gH/gL-gD complex. Interacts (via C-terminus) with UL11 tegument protein. Interacts (via C-terminus) with VP22 tegument protein; this interaction might be very weak (By similarity). Interacts with host RSAD2 (By similarity).</text>
</comment>
<comment type="subcellular location">
    <subcellularLocation>
        <location evidence="2">Virion membrane</location>
        <topology evidence="2">Single-pass type I membrane protein</topology>
    </subcellularLocation>
    <subcellularLocation>
        <location evidence="3">Host Golgi apparatus</location>
    </subcellularLocation>
    <text evidence="3">During virion morphogenesis, this protein probably accumulates in the endosomes and trans-Golgi where secondary envelopment occurs.</text>
</comment>
<comment type="similarity">
    <text evidence="9">Belongs to the herpesviridae glycoprotein D family.</text>
</comment>
<sequence length="394" mass="43317">MGGAAARLGAVILFVVIVGLHGVRGKYALADASLKMADPNRFRGKDLPVLDQLTDPPGVRRVYHIQAGLPDPFQPPSLPITVYYAVLERACRSVLLNAPSEAPQIVRGASEDVRKQPYNLTIAWFRMGGNCAIPITVMEYTECSYNKSLGACPIRTQPRWNYYDSFSAVSEDNLGFLMHAPAFETAGTYLRLVKINDWTEITQFILEHRAKGSCKYALPLRIPPSACLSPQAYQQGVTVDSIGMLPRFIPENQRTVAVYSLKIAGWHGPKAPYTSTLLPPELSETPNATQPELAPEDPEDSALLEDPVGTVAPQIPPNWHIPSIQDAATPYHPPATPNNMGLIAGAVGGSLLAALVICGIVYWMHRRTRKAPKRIRLPHIREDDQPSSHQPLFY</sequence>
<dbReference type="EMBL" id="L09243">
    <property type="protein sequence ID" value="AAA19629.1"/>
    <property type="molecule type" value="Unassigned_DNA"/>
</dbReference>
<dbReference type="EMBL" id="L09244">
    <property type="protein sequence ID" value="AAA19631.1"/>
    <property type="molecule type" value="Unassigned_DNA"/>
</dbReference>
<dbReference type="EMBL" id="L09245">
    <property type="protein sequence ID" value="AAA19630.1"/>
    <property type="molecule type" value="Unassigned_DNA"/>
</dbReference>
<dbReference type="EMBL" id="EF157319">
    <property type="protein sequence ID" value="ABM52978.1"/>
    <property type="molecule type" value="Genomic_DNA"/>
</dbReference>
<dbReference type="EMBL" id="EF157320">
    <property type="protein sequence ID" value="ABM52979.1"/>
    <property type="molecule type" value="Genomic_DNA"/>
</dbReference>
<dbReference type="EMBL" id="EF157321">
    <property type="protein sequence ID" value="ABM52980.1"/>
    <property type="molecule type" value="Genomic_DNA"/>
</dbReference>
<dbReference type="BMRB" id="A1Z0Q5"/>
<dbReference type="SMR" id="A1Z0Q5"/>
<dbReference type="MINT" id="A1Z0Q5"/>
<dbReference type="GlyCosmos" id="A1Z0Q5">
    <property type="glycosylation" value="3 sites, No reported glycans"/>
</dbReference>
<dbReference type="GO" id="GO:0044177">
    <property type="term" value="C:host cell Golgi apparatus"/>
    <property type="evidence" value="ECO:0007669"/>
    <property type="project" value="UniProtKB-SubCell"/>
</dbReference>
<dbReference type="GO" id="GO:0016020">
    <property type="term" value="C:membrane"/>
    <property type="evidence" value="ECO:0007669"/>
    <property type="project" value="UniProtKB-KW"/>
</dbReference>
<dbReference type="GO" id="GO:0019031">
    <property type="term" value="C:viral envelope"/>
    <property type="evidence" value="ECO:0007669"/>
    <property type="project" value="UniProtKB-KW"/>
</dbReference>
<dbReference type="GO" id="GO:0055036">
    <property type="term" value="C:virion membrane"/>
    <property type="evidence" value="ECO:0000250"/>
    <property type="project" value="UniProt"/>
</dbReference>
<dbReference type="GO" id="GO:0046872">
    <property type="term" value="F:metal ion binding"/>
    <property type="evidence" value="ECO:0007669"/>
    <property type="project" value="UniProtKB-KW"/>
</dbReference>
<dbReference type="GO" id="GO:0048018">
    <property type="term" value="F:receptor ligand activity"/>
    <property type="evidence" value="ECO:0000314"/>
    <property type="project" value="UniProt"/>
</dbReference>
<dbReference type="GO" id="GO:0098670">
    <property type="term" value="P:entry receptor-mediated virion attachment to host cell"/>
    <property type="evidence" value="ECO:0007669"/>
    <property type="project" value="UniProtKB-KW"/>
</dbReference>
<dbReference type="GO" id="GO:0046718">
    <property type="term" value="P:symbiont entry into host cell"/>
    <property type="evidence" value="ECO:0000314"/>
    <property type="project" value="UniProt"/>
</dbReference>
<dbReference type="CDD" id="cd12087">
    <property type="entry name" value="TM_EGFR-like"/>
    <property type="match status" value="1"/>
</dbReference>
<dbReference type="FunFam" id="2.70.230.10:FF:000001">
    <property type="entry name" value="Envelope glycoprotein D"/>
    <property type="match status" value="1"/>
</dbReference>
<dbReference type="Gene3D" id="2.70.230.10">
    <property type="match status" value="1"/>
</dbReference>
<dbReference type="InterPro" id="IPR002896">
    <property type="entry name" value="Herpes_glycop_dom"/>
</dbReference>
<dbReference type="InterPro" id="IPR036179">
    <property type="entry name" value="Ig-like_dom_sf"/>
</dbReference>
<dbReference type="Pfam" id="PF01537">
    <property type="entry name" value="Herpes_glycop_D"/>
    <property type="match status" value="1"/>
</dbReference>
<dbReference type="SUPFAM" id="SSF48726">
    <property type="entry name" value="Immunoglobulin"/>
    <property type="match status" value="1"/>
</dbReference>
<accession>A1Z0Q5</accession>
<accession>Q05060</accession>
<accession>Q69081</accession>
<accession>Q69082</accession>
<feature type="signal peptide" evidence="4">
    <location>
        <begin position="1"/>
        <end position="25"/>
    </location>
</feature>
<feature type="chain" id="PRO_5000142086" description="Envelope glycoprotein D">
    <location>
        <begin position="26"/>
        <end position="394"/>
    </location>
</feature>
<feature type="topological domain" description="Virion surface" evidence="4">
    <location>
        <begin position="26"/>
        <end position="340"/>
    </location>
</feature>
<feature type="transmembrane region" description="Helical" evidence="4">
    <location>
        <begin position="341"/>
        <end position="361"/>
    </location>
</feature>
<feature type="topological domain" description="Intravirion" evidence="4">
    <location>
        <begin position="362"/>
        <end position="394"/>
    </location>
</feature>
<feature type="region of interest" description="Interaction with TNFRSF14" evidence="8">
    <location>
        <begin position="26"/>
        <end position="57"/>
    </location>
</feature>
<feature type="region of interest" description="Profusion" evidence="2">
    <location>
        <begin position="261"/>
        <end position="305"/>
    </location>
</feature>
<feature type="region of interest" description="Disordered" evidence="5">
    <location>
        <begin position="275"/>
        <end position="301"/>
    </location>
</feature>
<feature type="binding site" evidence="1">
    <location>
        <position position="64"/>
    </location>
    <ligand>
        <name>Zn(2+)</name>
        <dbReference type="ChEBI" id="CHEBI:29105"/>
        <note>ligand shared between dimeric partners</note>
    </ligand>
</feature>
<feature type="binding site" evidence="1">
    <location>
        <position position="240"/>
    </location>
    <ligand>
        <name>Zn(2+)</name>
        <dbReference type="ChEBI" id="CHEBI:29105"/>
        <note>ligand shared between dimeric partners</note>
    </ligand>
</feature>
<feature type="glycosylation site" description="N-linked (GlcNAc...) asparagine; by host" evidence="4">
    <location>
        <position position="119"/>
    </location>
</feature>
<feature type="glycosylation site" description="N-linked (GlcNAc...) asparagine; by host" evidence="4">
    <location>
        <position position="146"/>
    </location>
</feature>
<feature type="glycosylation site" description="N-linked (GlcNAc...) asparagine; by host" evidence="4">
    <location>
        <position position="287"/>
    </location>
</feature>
<feature type="disulfide bond" evidence="1">
    <location>
        <begin position="91"/>
        <end position="214"/>
    </location>
</feature>
<feature type="disulfide bond" evidence="1">
    <location>
        <begin position="131"/>
        <end position="227"/>
    </location>
</feature>
<feature type="disulfide bond" evidence="1">
    <location>
        <begin position="143"/>
        <end position="152"/>
    </location>
</feature>
<feature type="sequence variant" description="In strain: Mutant rid1 and Isolate KOSc(AC3,AC6); interference resistant.">
    <original>Q</original>
    <variation>P</variation>
    <location>
        <position position="52"/>
    </location>
</feature>
<feature type="sequence variant" description="In strain: Mutant rid2; interference resistant.">
    <original>Q</original>
    <variation>R</variation>
    <location>
        <position position="52"/>
    </location>
</feature>
<feature type="sequence conflict" description="In Ref. 1; AAA19630 and 2; ABM52980." evidence="9" ref="1 2">
    <original>A</original>
    <variation>V</variation>
    <location>
        <position position="30"/>
    </location>
</feature>
<protein>
    <recommendedName>
        <fullName>Envelope glycoprotein D</fullName>
        <shortName>gD</shortName>
    </recommendedName>
</protein>
<reference key="1">
    <citation type="journal article" date="2007" name="Virology">
        <title>Molecular basis for resistance of herpes simplex virus type 1 mutants to the sulfated oligosaccharide inhibitor PI-88.</title>
        <authorList>
            <person name="Ekblad M."/>
            <person name="Adamiak B."/>
            <person name="Bergefall K."/>
            <person name="Nenonen H."/>
            <person name="Roth A."/>
            <person name="Bergstrom T."/>
            <person name="Ferro V."/>
            <person name="Trybala E."/>
        </authorList>
    </citation>
    <scope>NUCLEOTIDE SEQUENCE [GENOMIC DNA]</scope>
    <source>
        <strain>Isolate KOSc</strain>
        <strain>Isolate KOSc(AC3,AC6)</strain>
        <strain>Isolate KOSc(AC4)</strain>
    </source>
</reference>
<reference key="2">
    <citation type="journal article" date="1994" name="Virology">
        <title>Single amino acid substitutions in glycoprotein D of herpes simplex virus type 1 that confer resistance to gD-mediated interference also alter virus infectivity.</title>
        <authorList>
            <person name="Dean H.J."/>
            <person name="Terhune S.S."/>
            <person name="Shieh M.-T."/>
            <person name="Spear P.G."/>
        </authorList>
    </citation>
    <scope>NUCLEOTIDE SEQUENCE [GENOMIC DNA]</scope>
    <source>
        <strain>KOS</strain>
        <strain>Mutant Rid1</strain>
        <strain>Mutant Rid2</strain>
    </source>
</reference>
<reference key="3">
    <citation type="journal article" date="1998" name="J. Virol.">
        <title>Herpes simplex virus glycoprotein D can bind to poliovirus receptor-related protein 1 or herpesvirus entry mediator, two structurally unrelated mediators of virus entry.</title>
        <authorList>
            <person name="Krummenacher C."/>
            <person name="Nicola A.V."/>
            <person name="Whitbeck J.C."/>
            <person name="Lou H."/>
            <person name="Hou W."/>
            <person name="Lambris J.D."/>
            <person name="Geraghty R.J."/>
            <person name="Spear P.G."/>
            <person name="Cohen G.H."/>
            <person name="Eisenberg R.J."/>
        </authorList>
    </citation>
    <scope>FUNCTION</scope>
    <scope>INTERACTION WITH HUMAN RECEPTORS NECTIN1 AND TNFRSF14</scope>
</reference>
<reference key="4">
    <citation type="journal article" date="1999" name="Cell">
        <title>A novel role for 3-O-sulfated heparan sulfate in herpes simplex virus 1 entry.</title>
        <authorList>
            <person name="Shukla D."/>
            <person name="Liu J."/>
            <person name="Blaiklock P."/>
            <person name="Shworak N.W."/>
            <person name="Bai X."/>
            <person name="Esko J.D."/>
            <person name="Cohen G.H."/>
            <person name="Eisenberg R.J."/>
            <person name="Rosenberg R.D."/>
            <person name="Spear P.G."/>
        </authorList>
    </citation>
    <scope>BINDING TO 3-O-SULFATED HEPARAN SULFATE</scope>
</reference>
<reference key="5">
    <citation type="journal article" date="2001" name="J. Virol.">
        <title>Structural features of nectin-2 (HveB) required for herpes simplex virus entry.</title>
        <authorList>
            <person name="Martinez W.M."/>
            <person name="Spear P.G."/>
        </authorList>
    </citation>
    <scope>INTERACTION OF MUTANT RID1 WITH HUMAN NECTIN2</scope>
    <source>
        <strain>Mutant Rid1</strain>
    </source>
</reference>
<reference key="6">
    <citation type="journal article" date="2024" name="Nature">
        <title>TMEFF1 is a neuron-specific restriction factor for herpes simplex virus.</title>
        <authorList>
            <person name="Dai Y."/>
            <person name="Idorn M."/>
            <person name="Serrero M.C."/>
            <person name="Pan X."/>
            <person name="Thomsen E.A."/>
            <person name="Narita R."/>
            <person name="Maimaitili M."/>
            <person name="Qian X."/>
            <person name="Iversen M.B."/>
            <person name="Reinert L.S."/>
            <person name="Flygaard R.K."/>
            <person name="Chen M."/>
            <person name="Ding X."/>
            <person name="Zhang B.C."/>
            <person name="Carter-Timofte M.E."/>
            <person name="Lu Q."/>
            <person name="Jiang Z."/>
            <person name="Zhong Y."/>
            <person name="Zhang S."/>
            <person name="Da L."/>
            <person name="Zhu J."/>
            <person name="Denham M."/>
            <person name="Nissen P."/>
            <person name="Mogensen T.H."/>
            <person name="Mikkelsen J.G."/>
            <person name="Zhang S.Y."/>
            <person name="Casanova J.L."/>
            <person name="Cai Y."/>
            <person name="Paludan S.R."/>
        </authorList>
    </citation>
    <scope>FUNCTION</scope>
</reference>
<reference key="7">
    <citation type="journal article" date="2024" name="Nature">
        <title>Human TMEFF1 is a restriction factor for herpes simplex virus in the brain.</title>
        <authorList>
            <person name="Chan Y.H."/>
            <person name="Liu Z."/>
            <person name="Bastard P."/>
            <person name="Khobrekar N."/>
            <person name="Hutchison K.M."/>
            <person name="Yamazaki Y."/>
            <person name="Fan Q."/>
            <person name="Matuozzo D."/>
            <person name="Harschnitz O."/>
            <person name="Kerrouche N."/>
            <person name="Nakajima K."/>
            <person name="Amin P."/>
            <person name="Yatim A."/>
            <person name="Rinchai D."/>
            <person name="Chen J."/>
            <person name="Zhang P."/>
            <person name="Ciceri G."/>
            <person name="Chen J."/>
            <person name="Dobbs K."/>
            <person name="Belkaya S."/>
            <person name="Lee D."/>
            <person name="Gervais A."/>
            <person name="Aydin K."/>
            <person name="Kartal A."/>
            <person name="Hasek M.L."/>
            <person name="Zhao S."/>
            <person name="Reino E.G."/>
            <person name="Lee Y.S."/>
            <person name="Seeleuthner Y."/>
            <person name="Chaldebas M."/>
            <person name="Bailey R."/>
            <person name="Vanhulle C."/>
            <person name="Lorenzo L."/>
            <person name="Boucherit S."/>
            <person name="Rozenberg F."/>
            <person name="Marr N."/>
            <person name="Mogensen T.H."/>
            <person name="Aubart M."/>
            <person name="Cobat A."/>
            <person name="Dulac O."/>
            <person name="Emiroglu M."/>
            <person name="Paludan S.R."/>
            <person name="Abel L."/>
            <person name="Notarangelo L."/>
            <person name="Longnecker R."/>
            <person name="Smith G."/>
            <person name="Studer L."/>
            <person name="Casanova J.L."/>
            <person name="Zhang S.Y."/>
        </authorList>
    </citation>
    <scope>FUNCTION</scope>
</reference>
<keyword id="KW-1015">Disulfide bond</keyword>
<keyword id="KW-0325">Glycoprotein</keyword>
<keyword id="KW-1040">Host Golgi apparatus</keyword>
<keyword id="KW-0945">Host-virus interaction</keyword>
<keyword id="KW-0472">Membrane</keyword>
<keyword id="KW-0479">Metal-binding</keyword>
<keyword id="KW-0732">Signal</keyword>
<keyword id="KW-0812">Transmembrane</keyword>
<keyword id="KW-1133">Transmembrane helix</keyword>
<keyword id="KW-1161">Viral attachment to host cell</keyword>
<keyword id="KW-1234">Viral attachment to host entry receptor</keyword>
<keyword id="KW-0261">Viral envelope protein</keyword>
<keyword id="KW-0946">Virion</keyword>
<keyword id="KW-1160">Virus entry into host cell</keyword>
<keyword id="KW-0862">Zinc</keyword>
<proteinExistence type="evidence at protein level"/>
<evidence type="ECO:0000250" key="1">
    <source>
        <dbReference type="UniProtKB" id="P57083"/>
    </source>
</evidence>
<evidence type="ECO:0000250" key="2">
    <source>
        <dbReference type="UniProtKB" id="Q05059"/>
    </source>
</evidence>
<evidence type="ECO:0000250" key="3">
    <source>
        <dbReference type="UniProtKB" id="Q69091"/>
    </source>
</evidence>
<evidence type="ECO:0000255" key="4"/>
<evidence type="ECO:0000256" key="5">
    <source>
        <dbReference type="SAM" id="MobiDB-lite"/>
    </source>
</evidence>
<evidence type="ECO:0000269" key="6">
    <source>
    </source>
</evidence>
<evidence type="ECO:0000269" key="7">
    <source>
    </source>
</evidence>
<evidence type="ECO:0000269" key="8">
    <source>
    </source>
</evidence>
<evidence type="ECO:0000305" key="9"/>
<organism>
    <name type="scientific">Human herpesvirus 1 (strain KOS)</name>
    <name type="common">HHV-1</name>
    <name type="synonym">Human herpes simplex virus 1</name>
    <dbReference type="NCBI Taxonomy" id="10306"/>
    <lineage>
        <taxon>Viruses</taxon>
        <taxon>Duplodnaviria</taxon>
        <taxon>Heunggongvirae</taxon>
        <taxon>Peploviricota</taxon>
        <taxon>Herviviricetes</taxon>
        <taxon>Herpesvirales</taxon>
        <taxon>Orthoherpesviridae</taxon>
        <taxon>Alphaherpesvirinae</taxon>
        <taxon>Simplexvirus</taxon>
        <taxon>Simplexvirus humanalpha1</taxon>
        <taxon>Human herpesvirus 1</taxon>
    </lineage>
</organism>
<gene>
    <name type="primary">gD</name>
    <name type="ORF">US6</name>
</gene>
<organismHost>
    <name type="scientific">Homo sapiens</name>
    <name type="common">Human</name>
    <dbReference type="NCBI Taxonomy" id="9606"/>
</organismHost>